<organism>
    <name type="scientific">Salmonella choleraesuis (strain SC-B67)</name>
    <dbReference type="NCBI Taxonomy" id="321314"/>
    <lineage>
        <taxon>Bacteria</taxon>
        <taxon>Pseudomonadati</taxon>
        <taxon>Pseudomonadota</taxon>
        <taxon>Gammaproteobacteria</taxon>
        <taxon>Enterobacterales</taxon>
        <taxon>Enterobacteriaceae</taxon>
        <taxon>Salmonella</taxon>
    </lineage>
</organism>
<evidence type="ECO:0000255" key="1">
    <source>
        <dbReference type="HAMAP-Rule" id="MF_01187"/>
    </source>
</evidence>
<evidence type="ECO:0000305" key="2"/>
<name>YCAR_SALCH</name>
<reference key="1">
    <citation type="journal article" date="2005" name="Nucleic Acids Res.">
        <title>The genome sequence of Salmonella enterica serovar Choleraesuis, a highly invasive and resistant zoonotic pathogen.</title>
        <authorList>
            <person name="Chiu C.-H."/>
            <person name="Tang P."/>
            <person name="Chu C."/>
            <person name="Hu S."/>
            <person name="Bao Q."/>
            <person name="Yu J."/>
            <person name="Chou Y.-Y."/>
            <person name="Wang H.-S."/>
            <person name="Lee Y.-S."/>
        </authorList>
    </citation>
    <scope>NUCLEOTIDE SEQUENCE [LARGE SCALE GENOMIC DNA]</scope>
    <source>
        <strain>SC-B67</strain>
    </source>
</reference>
<proteinExistence type="inferred from homology"/>
<gene>
    <name evidence="1" type="primary">ycaR</name>
    <name type="ordered locus">SCH_0944</name>
</gene>
<dbReference type="EMBL" id="AE017220">
    <property type="protein sequence ID" value="AAX64850.1"/>
    <property type="status" value="ALT_INIT"/>
    <property type="molecule type" value="Genomic_DNA"/>
</dbReference>
<dbReference type="RefSeq" id="WP_000350061.1">
    <property type="nucleotide sequence ID" value="NC_006905.1"/>
</dbReference>
<dbReference type="SMR" id="Q57R11"/>
<dbReference type="KEGG" id="sec:SCH_0944"/>
<dbReference type="HOGENOM" id="CLU_155659_3_1_6"/>
<dbReference type="Proteomes" id="UP000000538">
    <property type="component" value="Chromosome"/>
</dbReference>
<dbReference type="GO" id="GO:0005829">
    <property type="term" value="C:cytosol"/>
    <property type="evidence" value="ECO:0007669"/>
    <property type="project" value="TreeGrafter"/>
</dbReference>
<dbReference type="FunFam" id="2.20.25.10:FF:000002">
    <property type="entry name" value="UPF0434 protein YcaR"/>
    <property type="match status" value="1"/>
</dbReference>
<dbReference type="Gene3D" id="2.20.25.10">
    <property type="match status" value="1"/>
</dbReference>
<dbReference type="HAMAP" id="MF_01187">
    <property type="entry name" value="UPF0434"/>
    <property type="match status" value="1"/>
</dbReference>
<dbReference type="InterPro" id="IPR005651">
    <property type="entry name" value="Trm112-like"/>
</dbReference>
<dbReference type="NCBIfam" id="NF008806">
    <property type="entry name" value="PRK11827.1"/>
    <property type="match status" value="1"/>
</dbReference>
<dbReference type="PANTHER" id="PTHR33505:SF4">
    <property type="entry name" value="PROTEIN PREY, MITOCHONDRIAL"/>
    <property type="match status" value="1"/>
</dbReference>
<dbReference type="PANTHER" id="PTHR33505">
    <property type="entry name" value="ZGC:162634"/>
    <property type="match status" value="1"/>
</dbReference>
<dbReference type="Pfam" id="PF03966">
    <property type="entry name" value="Trm112p"/>
    <property type="match status" value="1"/>
</dbReference>
<dbReference type="SUPFAM" id="SSF158997">
    <property type="entry name" value="Trm112p-like"/>
    <property type="match status" value="1"/>
</dbReference>
<feature type="chain" id="PRO_0000291158" description="UPF0434 protein YcaR">
    <location>
        <begin position="1"/>
        <end position="60"/>
    </location>
</feature>
<sequence length="60" mass="6856">MDHRLLEIIACPVCNGKLWYNQEQQELICKLDNLAFPLRDGIPVLLENEARALTSDESKS</sequence>
<accession>Q57R11</accession>
<comment type="similarity">
    <text evidence="1">Belongs to the UPF0434 family.</text>
</comment>
<comment type="sequence caution" evidence="2">
    <conflict type="erroneous initiation">
        <sequence resource="EMBL-CDS" id="AAX64850"/>
    </conflict>
</comment>
<protein>
    <recommendedName>
        <fullName evidence="1">UPF0434 protein YcaR</fullName>
    </recommendedName>
</protein>